<comment type="function">
    <text evidence="2">With S4 and S5 plays an important role in translational accuracy.</text>
</comment>
<comment type="function">
    <text evidence="2">Interacts with and stabilizes bases of the 16S rRNA that are involved in tRNA selection in the A site and with the mRNA backbone. Located at the interface of the 30S and 50S subunits, it traverses the body of the 30S subunit contacting proteins on the other side and probably holding the rRNA structure together. The combined cluster of proteins S8, S12 and S17 appears to hold together the shoulder and platform of the 30S subunit.</text>
</comment>
<comment type="subunit">
    <text evidence="2">Part of the 30S ribosomal subunit. Contacts proteins S8 and S17. May interact with IF1 in the 30S initiation complex.</text>
</comment>
<comment type="similarity">
    <text evidence="2">Belongs to the universal ribosomal protein uS12 family.</text>
</comment>
<proteinExistence type="inferred from homology"/>
<name>RS12_THEVB</name>
<evidence type="ECO:0000250" key="1"/>
<evidence type="ECO:0000255" key="2">
    <source>
        <dbReference type="HAMAP-Rule" id="MF_00403"/>
    </source>
</evidence>
<evidence type="ECO:0000256" key="3">
    <source>
        <dbReference type="SAM" id="MobiDB-lite"/>
    </source>
</evidence>
<evidence type="ECO:0000305" key="4"/>
<accession>P59168</accession>
<sequence>MPTIQQLIRQERELLKRKTKSPALKGCPQRRGVCTRVYTTTPKKPNSALRKVARVRLTSGFEVTAYIPGIGHNLQEHSVVMIRGGRVKDLPGVRYHIIRGTLDTAGVKDRKQGRSKYGAKRPKPGEAAATGKKK</sequence>
<reference key="1">
    <citation type="journal article" date="2002" name="DNA Res.">
        <title>Complete genome structure of the thermophilic cyanobacterium Thermosynechococcus elongatus BP-1.</title>
        <authorList>
            <person name="Nakamura Y."/>
            <person name="Kaneko T."/>
            <person name="Sato S."/>
            <person name="Ikeuchi M."/>
            <person name="Katoh H."/>
            <person name="Sasamoto S."/>
            <person name="Watanabe A."/>
            <person name="Iriguchi M."/>
            <person name="Kawashima K."/>
            <person name="Kimura T."/>
            <person name="Kishida Y."/>
            <person name="Kiyokawa C."/>
            <person name="Kohara M."/>
            <person name="Matsumoto M."/>
            <person name="Matsuno A."/>
            <person name="Nakazaki N."/>
            <person name="Shimpo S."/>
            <person name="Sugimoto M."/>
            <person name="Takeuchi C."/>
            <person name="Yamada M."/>
            <person name="Tabata S."/>
        </authorList>
    </citation>
    <scope>NUCLEOTIDE SEQUENCE [LARGE SCALE GENOMIC DNA]</scope>
    <source>
        <strain>NIES-2133 / IAM M-273 / BP-1</strain>
    </source>
</reference>
<keyword id="KW-0488">Methylation</keyword>
<keyword id="KW-1185">Reference proteome</keyword>
<keyword id="KW-0687">Ribonucleoprotein</keyword>
<keyword id="KW-0689">Ribosomal protein</keyword>
<keyword id="KW-0694">RNA-binding</keyword>
<keyword id="KW-0699">rRNA-binding</keyword>
<keyword id="KW-0820">tRNA-binding</keyword>
<protein>
    <recommendedName>
        <fullName evidence="2">Small ribosomal subunit protein uS12</fullName>
    </recommendedName>
    <alternativeName>
        <fullName evidence="4">30S ribosomal protein S12</fullName>
    </alternativeName>
</protein>
<dbReference type="EMBL" id="BA000039">
    <property type="protein sequence ID" value="BAC09299.1"/>
    <property type="molecule type" value="Genomic_DNA"/>
</dbReference>
<dbReference type="RefSeq" id="NP_682537.1">
    <property type="nucleotide sequence ID" value="NC_004113.1"/>
</dbReference>
<dbReference type="RefSeq" id="WP_011057584.1">
    <property type="nucleotide sequence ID" value="NC_004113.1"/>
</dbReference>
<dbReference type="SMR" id="P59168"/>
<dbReference type="STRING" id="197221.gene:10748351"/>
<dbReference type="EnsemblBacteria" id="BAC09299">
    <property type="protein sequence ID" value="BAC09299"/>
    <property type="gene ID" value="BAC09299"/>
</dbReference>
<dbReference type="KEGG" id="tel:tlr1747"/>
<dbReference type="PATRIC" id="fig|197221.4.peg.1828"/>
<dbReference type="eggNOG" id="COG0048">
    <property type="taxonomic scope" value="Bacteria"/>
</dbReference>
<dbReference type="Proteomes" id="UP000000440">
    <property type="component" value="Chromosome"/>
</dbReference>
<dbReference type="GO" id="GO:0015935">
    <property type="term" value="C:small ribosomal subunit"/>
    <property type="evidence" value="ECO:0007669"/>
    <property type="project" value="InterPro"/>
</dbReference>
<dbReference type="GO" id="GO:0019843">
    <property type="term" value="F:rRNA binding"/>
    <property type="evidence" value="ECO:0007669"/>
    <property type="project" value="UniProtKB-UniRule"/>
</dbReference>
<dbReference type="GO" id="GO:0003735">
    <property type="term" value="F:structural constituent of ribosome"/>
    <property type="evidence" value="ECO:0007669"/>
    <property type="project" value="InterPro"/>
</dbReference>
<dbReference type="GO" id="GO:0000049">
    <property type="term" value="F:tRNA binding"/>
    <property type="evidence" value="ECO:0007669"/>
    <property type="project" value="UniProtKB-UniRule"/>
</dbReference>
<dbReference type="GO" id="GO:0006412">
    <property type="term" value="P:translation"/>
    <property type="evidence" value="ECO:0007669"/>
    <property type="project" value="UniProtKB-UniRule"/>
</dbReference>
<dbReference type="CDD" id="cd03368">
    <property type="entry name" value="Ribosomal_S12"/>
    <property type="match status" value="1"/>
</dbReference>
<dbReference type="FunFam" id="2.40.50.140:FF:000001">
    <property type="entry name" value="30S ribosomal protein S12"/>
    <property type="match status" value="1"/>
</dbReference>
<dbReference type="Gene3D" id="2.40.50.140">
    <property type="entry name" value="Nucleic acid-binding proteins"/>
    <property type="match status" value="1"/>
</dbReference>
<dbReference type="HAMAP" id="MF_00403_B">
    <property type="entry name" value="Ribosomal_uS12_B"/>
    <property type="match status" value="1"/>
</dbReference>
<dbReference type="InterPro" id="IPR012340">
    <property type="entry name" value="NA-bd_OB-fold"/>
</dbReference>
<dbReference type="InterPro" id="IPR006032">
    <property type="entry name" value="Ribosomal_uS12"/>
</dbReference>
<dbReference type="InterPro" id="IPR005679">
    <property type="entry name" value="Ribosomal_uS12_bac"/>
</dbReference>
<dbReference type="NCBIfam" id="TIGR00981">
    <property type="entry name" value="rpsL_bact"/>
    <property type="match status" value="1"/>
</dbReference>
<dbReference type="PANTHER" id="PTHR11652">
    <property type="entry name" value="30S RIBOSOMAL PROTEIN S12 FAMILY MEMBER"/>
    <property type="match status" value="1"/>
</dbReference>
<dbReference type="Pfam" id="PF00164">
    <property type="entry name" value="Ribosom_S12_S23"/>
    <property type="match status" value="1"/>
</dbReference>
<dbReference type="PIRSF" id="PIRSF002133">
    <property type="entry name" value="Ribosomal_S12/S23"/>
    <property type="match status" value="1"/>
</dbReference>
<dbReference type="PRINTS" id="PR01034">
    <property type="entry name" value="RIBOSOMALS12"/>
</dbReference>
<dbReference type="SUPFAM" id="SSF50249">
    <property type="entry name" value="Nucleic acid-binding proteins"/>
    <property type="match status" value="1"/>
</dbReference>
<dbReference type="PROSITE" id="PS00055">
    <property type="entry name" value="RIBOSOMAL_S12"/>
    <property type="match status" value="1"/>
</dbReference>
<feature type="chain" id="PRO_0000146334" description="Small ribosomal subunit protein uS12">
    <location>
        <begin position="1"/>
        <end position="134"/>
    </location>
</feature>
<feature type="region of interest" description="Disordered" evidence="3">
    <location>
        <begin position="103"/>
        <end position="134"/>
    </location>
</feature>
<feature type="compositionally biased region" description="Basic residues" evidence="3">
    <location>
        <begin position="113"/>
        <end position="122"/>
    </location>
</feature>
<feature type="modified residue" description="3-methylthioaspartic acid" evidence="1">
    <location>
        <position position="89"/>
    </location>
</feature>
<organism>
    <name type="scientific">Thermosynechococcus vestitus (strain NIES-2133 / IAM M-273 / BP-1)</name>
    <dbReference type="NCBI Taxonomy" id="197221"/>
    <lineage>
        <taxon>Bacteria</taxon>
        <taxon>Bacillati</taxon>
        <taxon>Cyanobacteriota</taxon>
        <taxon>Cyanophyceae</taxon>
        <taxon>Acaryochloridales</taxon>
        <taxon>Thermosynechococcaceae</taxon>
        <taxon>Thermosynechococcus</taxon>
    </lineage>
</organism>
<gene>
    <name evidence="2" type="primary">rpsL</name>
    <name evidence="2" type="synonym">rps12</name>
    <name type="ordered locus">tlr1747</name>
</gene>